<name>AGLU_SCHPO</name>
<proteinExistence type="evidence at protein level"/>
<evidence type="ECO:0000255" key="1"/>
<evidence type="ECO:0000269" key="2">
    <source>
    </source>
</evidence>
<evidence type="ECO:0000305" key="3"/>
<gene>
    <name type="primary">agl1</name>
    <name type="synonym">agl</name>
    <name type="ORF">SPAPB24D3.10c</name>
</gene>
<dbReference type="EC" id="3.2.1.20"/>
<dbReference type="EMBL" id="CU329670">
    <property type="protein sequence ID" value="CAC36906.1"/>
    <property type="molecule type" value="Genomic_DNA"/>
</dbReference>
<dbReference type="EMBL" id="AB045751">
    <property type="protein sequence ID" value="BAB43946.1"/>
    <property type="molecule type" value="mRNA"/>
</dbReference>
<dbReference type="RefSeq" id="NP_593996.1">
    <property type="nucleotide sequence ID" value="NM_001019422.2"/>
</dbReference>
<dbReference type="SMR" id="Q9C0Y4"/>
<dbReference type="FunCoup" id="Q9C0Y4">
    <property type="interactions" value="51"/>
</dbReference>
<dbReference type="STRING" id="284812.Q9C0Y4"/>
<dbReference type="ChEMBL" id="CHEMBL3784909"/>
<dbReference type="CAZy" id="GH31">
    <property type="family name" value="Glycoside Hydrolase Family 31"/>
</dbReference>
<dbReference type="GlyCosmos" id="Q9C0Y4">
    <property type="glycosylation" value="27 sites, No reported glycans"/>
</dbReference>
<dbReference type="PaxDb" id="4896-SPAPB24D3.10c.1"/>
<dbReference type="GeneID" id="2543499"/>
<dbReference type="KEGG" id="spo:2543499"/>
<dbReference type="PomBase" id="SPAPB24D3.10c">
    <property type="gene designation" value="agl1"/>
</dbReference>
<dbReference type="eggNOG" id="KOG1065">
    <property type="taxonomic scope" value="Eukaryota"/>
</dbReference>
<dbReference type="HOGENOM" id="CLU_000631_11_0_1"/>
<dbReference type="InParanoid" id="Q9C0Y4"/>
<dbReference type="PhylomeDB" id="Q9C0Y4"/>
<dbReference type="BRENDA" id="3.2.1.20">
    <property type="organism ID" value="5613"/>
</dbReference>
<dbReference type="Reactome" id="R-SPO-189085">
    <property type="pathway name" value="Digestion of dietary carbohydrate"/>
</dbReference>
<dbReference type="Reactome" id="R-SPO-6798695">
    <property type="pathway name" value="Neutrophil degranulation"/>
</dbReference>
<dbReference type="Reactome" id="R-SPO-70221">
    <property type="pathway name" value="Glycogen breakdown (glycogenolysis)"/>
</dbReference>
<dbReference type="PRO" id="PR:Q9C0Y4"/>
<dbReference type="Proteomes" id="UP000002485">
    <property type="component" value="Chromosome I"/>
</dbReference>
<dbReference type="GO" id="GO:0005576">
    <property type="term" value="C:extracellular region"/>
    <property type="evidence" value="ECO:0000314"/>
    <property type="project" value="PomBase"/>
</dbReference>
<dbReference type="GO" id="GO:0004558">
    <property type="term" value="F:alpha-1,4-glucosidase activity"/>
    <property type="evidence" value="ECO:0000314"/>
    <property type="project" value="PomBase"/>
</dbReference>
<dbReference type="GO" id="GO:0030246">
    <property type="term" value="F:carbohydrate binding"/>
    <property type="evidence" value="ECO:0007669"/>
    <property type="project" value="InterPro"/>
</dbReference>
<dbReference type="GO" id="GO:0004553">
    <property type="term" value="F:hydrolase activity, hydrolyzing O-glycosyl compounds"/>
    <property type="evidence" value="ECO:0000318"/>
    <property type="project" value="GO_Central"/>
</dbReference>
<dbReference type="GO" id="GO:0000025">
    <property type="term" value="P:maltose catabolic process"/>
    <property type="evidence" value="ECO:0000314"/>
    <property type="project" value="PomBase"/>
</dbReference>
<dbReference type="CDD" id="cd06602">
    <property type="entry name" value="GH31_MGAM_SI_GAA"/>
    <property type="match status" value="1"/>
</dbReference>
<dbReference type="CDD" id="cd14752">
    <property type="entry name" value="GH31_N"/>
    <property type="match status" value="1"/>
</dbReference>
<dbReference type="FunFam" id="2.60.40.1180:FF:000001">
    <property type="entry name" value="Maltase-glucoamylase, intestinal"/>
    <property type="match status" value="1"/>
</dbReference>
<dbReference type="FunFam" id="2.60.40.1180:FF:000005">
    <property type="entry name" value="Maltase-glucoamylase, intestinal"/>
    <property type="match status" value="1"/>
</dbReference>
<dbReference type="FunFam" id="2.60.40.1760:FF:000005">
    <property type="entry name" value="Putative alpha-glucosidase AgdA"/>
    <property type="match status" value="1"/>
</dbReference>
<dbReference type="FunFam" id="3.20.20.80:FF:000138">
    <property type="entry name" value="Putative alpha-glucosidase AgdA"/>
    <property type="match status" value="1"/>
</dbReference>
<dbReference type="FunFam" id="3.20.20.80:FF:000169">
    <property type="entry name" value="Putative alpha-glucosidase AgdA"/>
    <property type="match status" value="1"/>
</dbReference>
<dbReference type="Gene3D" id="3.20.20.80">
    <property type="entry name" value="Glycosidases"/>
    <property type="match status" value="2"/>
</dbReference>
<dbReference type="Gene3D" id="2.60.40.1760">
    <property type="entry name" value="glycosyl hydrolase (family 31)"/>
    <property type="match status" value="1"/>
</dbReference>
<dbReference type="Gene3D" id="2.60.40.1180">
    <property type="entry name" value="Golgi alpha-mannosidase II"/>
    <property type="match status" value="2"/>
</dbReference>
<dbReference type="InterPro" id="IPR011013">
    <property type="entry name" value="Gal_mutarotase_sf_dom"/>
</dbReference>
<dbReference type="InterPro" id="IPR030458">
    <property type="entry name" value="Glyco_hydro_31_AS"/>
</dbReference>
<dbReference type="InterPro" id="IPR048395">
    <property type="entry name" value="Glyco_hydro_31_C"/>
</dbReference>
<dbReference type="InterPro" id="IPR030459">
    <property type="entry name" value="Glyco_hydro_31_CS"/>
</dbReference>
<dbReference type="InterPro" id="IPR025887">
    <property type="entry name" value="Glyco_hydro_31_N_dom"/>
</dbReference>
<dbReference type="InterPro" id="IPR000322">
    <property type="entry name" value="Glyco_hydro_31_TIM"/>
</dbReference>
<dbReference type="InterPro" id="IPR013780">
    <property type="entry name" value="Glyco_hydro_b"/>
</dbReference>
<dbReference type="InterPro" id="IPR017853">
    <property type="entry name" value="Glycoside_hydrolase_SF"/>
</dbReference>
<dbReference type="PANTHER" id="PTHR22762">
    <property type="entry name" value="ALPHA-GLUCOSIDASE"/>
    <property type="match status" value="1"/>
</dbReference>
<dbReference type="PANTHER" id="PTHR22762:SF133">
    <property type="entry name" value="P-TYPE DOMAIN-CONTAINING PROTEIN"/>
    <property type="match status" value="1"/>
</dbReference>
<dbReference type="Pfam" id="PF13802">
    <property type="entry name" value="Gal_mutarotas_2"/>
    <property type="match status" value="1"/>
</dbReference>
<dbReference type="Pfam" id="PF01055">
    <property type="entry name" value="Glyco_hydro_31_2nd"/>
    <property type="match status" value="1"/>
</dbReference>
<dbReference type="Pfam" id="PF21365">
    <property type="entry name" value="Glyco_hydro_31_3rd"/>
    <property type="match status" value="1"/>
</dbReference>
<dbReference type="SUPFAM" id="SSF51445">
    <property type="entry name" value="(Trans)glycosidases"/>
    <property type="match status" value="1"/>
</dbReference>
<dbReference type="SUPFAM" id="SSF74650">
    <property type="entry name" value="Galactose mutarotase-like"/>
    <property type="match status" value="1"/>
</dbReference>
<dbReference type="SUPFAM" id="SSF51011">
    <property type="entry name" value="Glycosyl hydrolase domain"/>
    <property type="match status" value="1"/>
</dbReference>
<dbReference type="PROSITE" id="PS00129">
    <property type="entry name" value="GLYCOSYL_HYDROL_F31_1"/>
    <property type="match status" value="1"/>
</dbReference>
<dbReference type="PROSITE" id="PS00707">
    <property type="entry name" value="GLYCOSYL_HYDROL_F31_2"/>
    <property type="match status" value="1"/>
</dbReference>
<organism>
    <name type="scientific">Schizosaccharomyces pombe (strain 972 / ATCC 24843)</name>
    <name type="common">Fission yeast</name>
    <dbReference type="NCBI Taxonomy" id="284812"/>
    <lineage>
        <taxon>Eukaryota</taxon>
        <taxon>Fungi</taxon>
        <taxon>Dikarya</taxon>
        <taxon>Ascomycota</taxon>
        <taxon>Taphrinomycotina</taxon>
        <taxon>Schizosaccharomycetes</taxon>
        <taxon>Schizosaccharomycetales</taxon>
        <taxon>Schizosaccharomycetaceae</taxon>
        <taxon>Schizosaccharomyces</taxon>
    </lineage>
</organism>
<feature type="signal peptide" evidence="2">
    <location>
        <begin position="1"/>
        <end position="24"/>
    </location>
</feature>
<feature type="chain" id="PRO_0000018581" description="Alpha-glucosidase">
    <location>
        <begin position="25"/>
        <end position="969"/>
    </location>
</feature>
<feature type="active site" description="Nucleophile">
    <location>
        <position position="481"/>
    </location>
</feature>
<feature type="active site">
    <location>
        <position position="484"/>
    </location>
</feature>
<feature type="active site" description="Proton donor">
    <location>
        <position position="647"/>
    </location>
</feature>
<feature type="glycosylation site" description="N-linked (GlcNAc...) asparagine" evidence="1">
    <location>
        <position position="37"/>
    </location>
</feature>
<feature type="glycosylation site" description="N-linked (GlcNAc...) asparagine" evidence="1">
    <location>
        <position position="67"/>
    </location>
</feature>
<feature type="glycosylation site" description="N-linked (GlcNAc...) asparagine" evidence="1">
    <location>
        <position position="99"/>
    </location>
</feature>
<feature type="glycosylation site" description="N-linked (GlcNAc...) asparagine" evidence="1">
    <location>
        <position position="116"/>
    </location>
</feature>
<feature type="glycosylation site" description="N-linked (GlcNAc...) asparagine" evidence="1">
    <location>
        <position position="139"/>
    </location>
</feature>
<feature type="glycosylation site" description="N-linked (GlcNAc...) asparagine" evidence="1">
    <location>
        <position position="146"/>
    </location>
</feature>
<feature type="glycosylation site" description="N-linked (GlcNAc...) asparagine" evidence="1">
    <location>
        <position position="209"/>
    </location>
</feature>
<feature type="glycosylation site" description="N-linked (GlcNAc...) asparagine" evidence="1">
    <location>
        <position position="245"/>
    </location>
</feature>
<feature type="glycosylation site" description="N-linked (GlcNAc...) asparagine" evidence="1">
    <location>
        <position position="249"/>
    </location>
</feature>
<feature type="glycosylation site" description="N-linked (GlcNAc...) asparagine" evidence="1">
    <location>
        <position position="331"/>
    </location>
</feature>
<feature type="glycosylation site" description="N-linked (GlcNAc...) asparagine" evidence="1">
    <location>
        <position position="406"/>
    </location>
</feature>
<feature type="glycosylation site" description="N-linked (GlcNAc...) asparagine" evidence="1">
    <location>
        <position position="429"/>
    </location>
</feature>
<feature type="glycosylation site" description="N-linked (GlcNAc...) asparagine" evidence="1">
    <location>
        <position position="462"/>
    </location>
</feature>
<feature type="glycosylation site" description="N-linked (GlcNAc...) asparagine" evidence="1">
    <location>
        <position position="470"/>
    </location>
</feature>
<feature type="glycosylation site" description="N-linked (GlcNAc...) asparagine" evidence="1">
    <location>
        <position position="520"/>
    </location>
</feature>
<feature type="glycosylation site" description="N-linked (GlcNAc...) asparagine" evidence="1">
    <location>
        <position position="523"/>
    </location>
</feature>
<feature type="glycosylation site" description="N-linked (GlcNAc...) asparagine" evidence="1">
    <location>
        <position position="589"/>
    </location>
</feature>
<feature type="glycosylation site" description="N-linked (GlcNAc...) asparagine" evidence="1">
    <location>
        <position position="648"/>
    </location>
</feature>
<feature type="glycosylation site" description="N-linked (GlcNAc...) asparagine" evidence="1">
    <location>
        <position position="801"/>
    </location>
</feature>
<feature type="glycosylation site" description="N-linked (GlcNAc...) asparagine" evidence="1">
    <location>
        <position position="810"/>
    </location>
</feature>
<feature type="glycosylation site" description="N-linked (GlcNAc...) asparagine" evidence="1">
    <location>
        <position position="821"/>
    </location>
</feature>
<feature type="glycosylation site" description="N-linked (GlcNAc...) asparagine" evidence="1">
    <location>
        <position position="885"/>
    </location>
</feature>
<feature type="glycosylation site" description="N-linked (GlcNAc...) asparagine" evidence="1">
    <location>
        <position position="915"/>
    </location>
</feature>
<feature type="glycosylation site" description="N-linked (GlcNAc...) asparagine" evidence="1">
    <location>
        <position position="934"/>
    </location>
</feature>
<feature type="glycosylation site" description="N-linked (GlcNAc...) asparagine" evidence="1">
    <location>
        <position position="942"/>
    </location>
</feature>
<feature type="glycosylation site" description="N-linked (GlcNAc...) asparagine" evidence="1">
    <location>
        <position position="954"/>
    </location>
</feature>
<feature type="glycosylation site" description="N-linked (GlcNAc...) asparagine" evidence="1">
    <location>
        <position position="966"/>
    </location>
</feature>
<feature type="mutagenesis site" description="Almost total loss of activity." evidence="2">
    <original>D</original>
    <variation>N</variation>
    <location>
        <position position="218"/>
    </location>
</feature>
<feature type="mutagenesis site" description="No loss of activity." evidence="2">
    <original>D</original>
    <variation>N</variation>
    <location>
        <position position="287"/>
    </location>
</feature>
<feature type="mutagenesis site" description="Almost total loss of activity." evidence="2">
    <original>D</original>
    <variation>E</variation>
    <variation>N</variation>
    <location>
        <position position="355"/>
    </location>
</feature>
<feature type="mutagenesis site" description="Loss of activity." evidence="2">
    <original>D</original>
    <variation>A</variation>
    <variation>E</variation>
    <variation>N</variation>
    <location>
        <position position="481"/>
    </location>
</feature>
<feature type="mutagenesis site" description="Loss of activity." evidence="2">
    <original>E</original>
    <variation>A</variation>
    <variation>Q</variation>
    <location>
        <position position="484"/>
    </location>
</feature>
<feature type="mutagenesis site" description="No loss of activity." evidence="2">
    <original>E</original>
    <variation>D</variation>
    <location>
        <position position="484"/>
    </location>
</feature>
<feature type="mutagenesis site" description="Loss of activity." evidence="2">
    <original>D</original>
    <variation>A</variation>
    <variation>E</variation>
    <variation>N</variation>
    <location>
        <position position="647"/>
    </location>
</feature>
<feature type="mutagenesis site" description="No loss of activity." evidence="2">
    <original>D</original>
    <variation>N</variation>
    <location>
        <position position="676"/>
    </location>
</feature>
<feature type="mutagenesis site" description="No loss of activity." evidence="2">
    <original>E</original>
    <variation>Q</variation>
    <location>
        <position position="714"/>
    </location>
</feature>
<feature type="mutagenesis site" description="Almost total loss of activity." evidence="2">
    <original>D</original>
    <variation>N</variation>
    <location>
        <position position="877"/>
    </location>
</feature>
<feature type="sequence conflict" description="In Ref. 2; CAC36906." evidence="3" ref="2">
    <original>L</original>
    <variation>F</variation>
    <location>
        <position position="30"/>
    </location>
</feature>
<feature type="sequence conflict" description="In Ref. 1; BAB43946." evidence="3" ref="1">
    <original>P</original>
    <variation>A</variation>
    <location>
        <position position="220"/>
    </location>
</feature>
<feature type="sequence conflict" description="In Ref. 1; BAB43946." evidence="3" ref="1">
    <original>T</original>
    <variation>V</variation>
    <location>
        <position position="507"/>
    </location>
</feature>
<feature type="sequence conflict" description="In Ref. 1; BAB43946." evidence="3" ref="1">
    <original>D</original>
    <variation>N</variation>
    <location>
        <position position="566"/>
    </location>
</feature>
<accession>Q9C0Y4</accession>
<sequence>MMISTAYQSLFLTALFSAISIAVGNVYQTLNVIGDRNVTIPTNGIPQRLSVYDPYRGVNCQGYQAVNISESQNGVTAYLALLGEPCYAYGTDYPLLFLNVTYEEADRVHISIKDANNTQFQFTSRKDLWDAPLYSPSYNNTNLLYNFSYNANPFEFWVTRKSDGEVLFDTRGQKLVFEDQYIELTTNMVENYNLYGLAETIHGLRLGNNLTRTFWANDEPSPVDQNMYGSHPYYLEQRYKADGINSTLNETTYTSSSHGVLMLTANGMDVLLRQDYLQYRMIGGVIDLFVYSGSTESPKETVKQFVQSIGKPAMHQYWTLGYHSCRWGYTNITEIMDVRQNYIDADIPVETFWSDIDYMEKYRDFTVDPVSYSKSDMQTFFSDLVSNHQHYVPIIDAAIYAANPYNHTDDSYYPYYAGVEKDIFLKNPNGSIYIGAVWPGFTAFPDFTNPDVVDYWKDCLINLTYAFGSNGTVPFSGIWTDMNEPSSFCVGSCGSAMIDLNPAEPLTGISKQYSIPEGFNVSNVTEYSSAYSASLSNYYATATSSVFQIVSPTATPLGLKPDYNIDWPPYAINNEQGNHDIANHIVSPNATTHDGTQRYDIFNMYGYGETKVSYAALTQISPNERPFILSRSTFLGSGVYGAHWLGDNHSLWSNMFFSISGMIVFNMMGIPMVGADVCGFLGDSDEELCSRWMAMGAFSPFYRNHNNIYQISQEPYTWSSVAEASRRAMYIRYSLLPYWYTIMAKASQDGTPALRALFVEFPNDPTLADVDRQFMVGDSLLVTPVLEPNVEYVQGVFPGDNSTVWYDWYNHTEIVRQYNENVTLYAPLEHINVAIRGGSVLPMQQPSLTTYESRQNPFNLLVALDRDGSATGELYLDDGVSIELNATLSVSFTFSDGVLSAVPTGSYEVSQPLANVTILGLTESPSSITLNGQNVSSFQYSNDTEELLITGLQNITSSGAFANSWNLTL</sequence>
<keyword id="KW-0903">Direct protein sequencing</keyword>
<keyword id="KW-0325">Glycoprotein</keyword>
<keyword id="KW-0326">Glycosidase</keyword>
<keyword id="KW-0378">Hydrolase</keyword>
<keyword id="KW-1185">Reference proteome</keyword>
<keyword id="KW-0964">Secreted</keyword>
<keyword id="KW-0732">Signal</keyword>
<reference key="1">
    <citation type="journal article" date="2001" name="Eur. J. Biochem.">
        <title>Carboxyl group of residue Asp647 as possible proton donor in catalytic reaction of alpha-glucosidase from Schizosaccharomyces pombe.</title>
        <authorList>
            <person name="Okuyama M."/>
            <person name="Okuno A."/>
            <person name="Shimizu N."/>
            <person name="Mori H."/>
            <person name="Kimura A."/>
            <person name="Chiba S."/>
        </authorList>
    </citation>
    <scope>NUCLEOTIDE SEQUENCE [MRNA]</scope>
    <scope>PROTEIN SEQUENCE OF 25-36; 175-194; 375-395 AND 427-451</scope>
    <scope>MUTAGENESIS OF ASP-218; ASP-287; ASP-355; ASP-481; GLU-484; ASP-647; ASP-676; GLU-714 AND ASP-877</scope>
</reference>
<reference key="2">
    <citation type="journal article" date="2002" name="Nature">
        <title>The genome sequence of Schizosaccharomyces pombe.</title>
        <authorList>
            <person name="Wood V."/>
            <person name="Gwilliam R."/>
            <person name="Rajandream M.A."/>
            <person name="Lyne M.H."/>
            <person name="Lyne R."/>
            <person name="Stewart A."/>
            <person name="Sgouros J.G."/>
            <person name="Peat N."/>
            <person name="Hayles J."/>
            <person name="Baker S.G."/>
            <person name="Basham D."/>
            <person name="Bowman S."/>
            <person name="Brooks K."/>
            <person name="Brown D."/>
            <person name="Brown S."/>
            <person name="Chillingworth T."/>
            <person name="Churcher C.M."/>
            <person name="Collins M."/>
            <person name="Connor R."/>
            <person name="Cronin A."/>
            <person name="Davis P."/>
            <person name="Feltwell T."/>
            <person name="Fraser A."/>
            <person name="Gentles S."/>
            <person name="Goble A."/>
            <person name="Hamlin N."/>
            <person name="Harris D.E."/>
            <person name="Hidalgo J."/>
            <person name="Hodgson G."/>
            <person name="Holroyd S."/>
            <person name="Hornsby T."/>
            <person name="Howarth S."/>
            <person name="Huckle E.J."/>
            <person name="Hunt S."/>
            <person name="Jagels K."/>
            <person name="James K.D."/>
            <person name="Jones L."/>
            <person name="Jones M."/>
            <person name="Leather S."/>
            <person name="McDonald S."/>
            <person name="McLean J."/>
            <person name="Mooney P."/>
            <person name="Moule S."/>
            <person name="Mungall K.L."/>
            <person name="Murphy L.D."/>
            <person name="Niblett D."/>
            <person name="Odell C."/>
            <person name="Oliver K."/>
            <person name="O'Neil S."/>
            <person name="Pearson D."/>
            <person name="Quail M.A."/>
            <person name="Rabbinowitsch E."/>
            <person name="Rutherford K.M."/>
            <person name="Rutter S."/>
            <person name="Saunders D."/>
            <person name="Seeger K."/>
            <person name="Sharp S."/>
            <person name="Skelton J."/>
            <person name="Simmonds M.N."/>
            <person name="Squares R."/>
            <person name="Squares S."/>
            <person name="Stevens K."/>
            <person name="Taylor K."/>
            <person name="Taylor R.G."/>
            <person name="Tivey A."/>
            <person name="Walsh S.V."/>
            <person name="Warren T."/>
            <person name="Whitehead S."/>
            <person name="Woodward J.R."/>
            <person name="Volckaert G."/>
            <person name="Aert R."/>
            <person name="Robben J."/>
            <person name="Grymonprez B."/>
            <person name="Weltjens I."/>
            <person name="Vanstreels E."/>
            <person name="Rieger M."/>
            <person name="Schaefer M."/>
            <person name="Mueller-Auer S."/>
            <person name="Gabel C."/>
            <person name="Fuchs M."/>
            <person name="Duesterhoeft A."/>
            <person name="Fritzc C."/>
            <person name="Holzer E."/>
            <person name="Moestl D."/>
            <person name="Hilbert H."/>
            <person name="Borzym K."/>
            <person name="Langer I."/>
            <person name="Beck A."/>
            <person name="Lehrach H."/>
            <person name="Reinhardt R."/>
            <person name="Pohl T.M."/>
            <person name="Eger P."/>
            <person name="Zimmermann W."/>
            <person name="Wedler H."/>
            <person name="Wambutt R."/>
            <person name="Purnelle B."/>
            <person name="Goffeau A."/>
            <person name="Cadieu E."/>
            <person name="Dreano S."/>
            <person name="Gloux S."/>
            <person name="Lelaure V."/>
            <person name="Mottier S."/>
            <person name="Galibert F."/>
            <person name="Aves S.J."/>
            <person name="Xiang Z."/>
            <person name="Hunt C."/>
            <person name="Moore K."/>
            <person name="Hurst S.M."/>
            <person name="Lucas M."/>
            <person name="Rochet M."/>
            <person name="Gaillardin C."/>
            <person name="Tallada V.A."/>
            <person name="Garzon A."/>
            <person name="Thode G."/>
            <person name="Daga R.R."/>
            <person name="Cruzado L."/>
            <person name="Jimenez J."/>
            <person name="Sanchez M."/>
            <person name="del Rey F."/>
            <person name="Benito J."/>
            <person name="Dominguez A."/>
            <person name="Revuelta J.L."/>
            <person name="Moreno S."/>
            <person name="Armstrong J."/>
            <person name="Forsburg S.L."/>
            <person name="Cerutti L."/>
            <person name="Lowe T."/>
            <person name="McCombie W.R."/>
            <person name="Paulsen I."/>
            <person name="Potashkin J."/>
            <person name="Shpakovski G.V."/>
            <person name="Ussery D."/>
            <person name="Barrell B.G."/>
            <person name="Nurse P."/>
        </authorList>
    </citation>
    <scope>NUCLEOTIDE SEQUENCE [LARGE SCALE GENOMIC DNA]</scope>
    <source>
        <strain>972 / ATCC 24843</strain>
    </source>
</reference>
<comment type="function">
    <text>Hydrolyzes malto-oligosaccharides, but has a low activity toward soluble starch.</text>
</comment>
<comment type="catalytic activity">
    <reaction>
        <text>Hydrolysis of terminal, non-reducing (1-&gt;4)-linked alpha-D-glucose residues with release of alpha-D-glucose.</text>
        <dbReference type="EC" id="3.2.1.20"/>
    </reaction>
</comment>
<comment type="subcellular location">
    <subcellularLocation>
        <location>Secreted</location>
    </subcellularLocation>
</comment>
<comment type="similarity">
    <text evidence="3">Belongs to the glycosyl hydrolase 31 family.</text>
</comment>
<protein>
    <recommendedName>
        <fullName>Alpha-glucosidase</fullName>
        <ecNumber>3.2.1.20</ecNumber>
    </recommendedName>
    <alternativeName>
        <fullName>Maltase</fullName>
    </alternativeName>
</protein>